<organism>
    <name type="scientific">Yersinia pestis</name>
    <dbReference type="NCBI Taxonomy" id="632"/>
    <lineage>
        <taxon>Bacteria</taxon>
        <taxon>Pseudomonadati</taxon>
        <taxon>Pseudomonadota</taxon>
        <taxon>Gammaproteobacteria</taxon>
        <taxon>Enterobacterales</taxon>
        <taxon>Yersiniaceae</taxon>
        <taxon>Yersinia</taxon>
    </lineage>
</organism>
<feature type="chain" id="PRO_0000348881" description="tRNA-cytidine(32) 2-sulfurtransferase">
    <location>
        <begin position="1"/>
        <end position="313"/>
    </location>
</feature>
<feature type="region of interest" description="Disordered" evidence="2">
    <location>
        <begin position="288"/>
        <end position="313"/>
    </location>
</feature>
<feature type="short sequence motif" description="PP-loop motif" evidence="1">
    <location>
        <begin position="47"/>
        <end position="52"/>
    </location>
</feature>
<feature type="compositionally biased region" description="Basic and acidic residues" evidence="2">
    <location>
        <begin position="299"/>
        <end position="313"/>
    </location>
</feature>
<feature type="binding site" evidence="1">
    <location>
        <position position="122"/>
    </location>
    <ligand>
        <name>[4Fe-4S] cluster</name>
        <dbReference type="ChEBI" id="CHEBI:49883"/>
    </ligand>
</feature>
<feature type="binding site" evidence="1">
    <location>
        <position position="125"/>
    </location>
    <ligand>
        <name>[4Fe-4S] cluster</name>
        <dbReference type="ChEBI" id="CHEBI:49883"/>
    </ligand>
</feature>
<feature type="binding site" evidence="1">
    <location>
        <position position="213"/>
    </location>
    <ligand>
        <name>[4Fe-4S] cluster</name>
        <dbReference type="ChEBI" id="CHEBI:49883"/>
    </ligand>
</feature>
<accession>Q7CIP8</accession>
<accession>Q74TN1</accession>
<name>TTCA_YERPE</name>
<dbReference type="EC" id="2.8.1.-" evidence="1"/>
<dbReference type="EMBL" id="AL590842">
    <property type="protein sequence ID" value="CAL20963.1"/>
    <property type="molecule type" value="Genomic_DNA"/>
</dbReference>
<dbReference type="EMBL" id="AE009952">
    <property type="protein sequence ID" value="AAM85564.1"/>
    <property type="molecule type" value="Genomic_DNA"/>
</dbReference>
<dbReference type="EMBL" id="AE017042">
    <property type="protein sequence ID" value="AAS62330.1"/>
    <property type="molecule type" value="Genomic_DNA"/>
</dbReference>
<dbReference type="PIR" id="AH0284">
    <property type="entry name" value="AH0284"/>
</dbReference>
<dbReference type="RefSeq" id="WP_002210992.1">
    <property type="nucleotide sequence ID" value="NZ_WUCM01000054.1"/>
</dbReference>
<dbReference type="RefSeq" id="YP_002347302.1">
    <property type="nucleotide sequence ID" value="NC_003143.1"/>
</dbReference>
<dbReference type="SMR" id="Q7CIP8"/>
<dbReference type="STRING" id="214092.YPO2335"/>
<dbReference type="PaxDb" id="214092-YPO2335"/>
<dbReference type="DNASU" id="1146945"/>
<dbReference type="EnsemblBacteria" id="AAS62330">
    <property type="protein sequence ID" value="AAS62330"/>
    <property type="gene ID" value="YP_2121"/>
</dbReference>
<dbReference type="GeneID" id="57976339"/>
<dbReference type="KEGG" id="ype:YPO2335"/>
<dbReference type="KEGG" id="ypk:y1998"/>
<dbReference type="KEGG" id="ypm:YP_2121"/>
<dbReference type="PATRIC" id="fig|214092.21.peg.2740"/>
<dbReference type="eggNOG" id="COG0037">
    <property type="taxonomic scope" value="Bacteria"/>
</dbReference>
<dbReference type="HOGENOM" id="CLU_026481_0_0_6"/>
<dbReference type="OMA" id="IGHNLDD"/>
<dbReference type="OrthoDB" id="9801054at2"/>
<dbReference type="Proteomes" id="UP000000815">
    <property type="component" value="Chromosome"/>
</dbReference>
<dbReference type="Proteomes" id="UP000001019">
    <property type="component" value="Chromosome"/>
</dbReference>
<dbReference type="Proteomes" id="UP000002490">
    <property type="component" value="Chromosome"/>
</dbReference>
<dbReference type="GO" id="GO:0005829">
    <property type="term" value="C:cytosol"/>
    <property type="evidence" value="ECO:0000318"/>
    <property type="project" value="GO_Central"/>
</dbReference>
<dbReference type="GO" id="GO:0051539">
    <property type="term" value="F:4 iron, 4 sulfur cluster binding"/>
    <property type="evidence" value="ECO:0007669"/>
    <property type="project" value="UniProtKB-UniRule"/>
</dbReference>
<dbReference type="GO" id="GO:0005524">
    <property type="term" value="F:ATP binding"/>
    <property type="evidence" value="ECO:0007669"/>
    <property type="project" value="UniProtKB-UniRule"/>
</dbReference>
<dbReference type="GO" id="GO:0000287">
    <property type="term" value="F:magnesium ion binding"/>
    <property type="evidence" value="ECO:0007669"/>
    <property type="project" value="UniProtKB-UniRule"/>
</dbReference>
<dbReference type="GO" id="GO:0016783">
    <property type="term" value="F:sulfurtransferase activity"/>
    <property type="evidence" value="ECO:0000318"/>
    <property type="project" value="GO_Central"/>
</dbReference>
<dbReference type="GO" id="GO:0000049">
    <property type="term" value="F:tRNA binding"/>
    <property type="evidence" value="ECO:0007669"/>
    <property type="project" value="UniProtKB-KW"/>
</dbReference>
<dbReference type="GO" id="GO:0034227">
    <property type="term" value="P:tRNA thio-modification"/>
    <property type="evidence" value="ECO:0000318"/>
    <property type="project" value="GO_Central"/>
</dbReference>
<dbReference type="CDD" id="cd24138">
    <property type="entry name" value="TtcA-like"/>
    <property type="match status" value="1"/>
</dbReference>
<dbReference type="Gene3D" id="3.40.50.620">
    <property type="entry name" value="HUPs"/>
    <property type="match status" value="1"/>
</dbReference>
<dbReference type="HAMAP" id="MF_01850">
    <property type="entry name" value="TtcA"/>
    <property type="match status" value="1"/>
</dbReference>
<dbReference type="InterPro" id="IPR014729">
    <property type="entry name" value="Rossmann-like_a/b/a_fold"/>
</dbReference>
<dbReference type="InterPro" id="IPR011063">
    <property type="entry name" value="TilS/TtcA_N"/>
</dbReference>
<dbReference type="InterPro" id="IPR012089">
    <property type="entry name" value="tRNA_Cyd_32_2_STrfase"/>
</dbReference>
<dbReference type="InterPro" id="IPR035107">
    <property type="entry name" value="tRNA_thiolation_TtcA_Ctu1"/>
</dbReference>
<dbReference type="NCBIfam" id="NF007972">
    <property type="entry name" value="PRK10696.1"/>
    <property type="match status" value="1"/>
</dbReference>
<dbReference type="PANTHER" id="PTHR43686:SF1">
    <property type="entry name" value="AMINOTRAN_5 DOMAIN-CONTAINING PROTEIN"/>
    <property type="match status" value="1"/>
</dbReference>
<dbReference type="PANTHER" id="PTHR43686">
    <property type="entry name" value="SULFURTRANSFERASE-RELATED"/>
    <property type="match status" value="1"/>
</dbReference>
<dbReference type="Pfam" id="PF01171">
    <property type="entry name" value="ATP_bind_3"/>
    <property type="match status" value="1"/>
</dbReference>
<dbReference type="PIRSF" id="PIRSF004976">
    <property type="entry name" value="ATPase_YdaO"/>
    <property type="match status" value="1"/>
</dbReference>
<dbReference type="SUPFAM" id="SSF52402">
    <property type="entry name" value="Adenine nucleotide alpha hydrolases-like"/>
    <property type="match status" value="1"/>
</dbReference>
<reference key="1">
    <citation type="journal article" date="2001" name="Nature">
        <title>Genome sequence of Yersinia pestis, the causative agent of plague.</title>
        <authorList>
            <person name="Parkhill J."/>
            <person name="Wren B.W."/>
            <person name="Thomson N.R."/>
            <person name="Titball R.W."/>
            <person name="Holden M.T.G."/>
            <person name="Prentice M.B."/>
            <person name="Sebaihia M."/>
            <person name="James K.D."/>
            <person name="Churcher C.M."/>
            <person name="Mungall K.L."/>
            <person name="Baker S."/>
            <person name="Basham D."/>
            <person name="Bentley S.D."/>
            <person name="Brooks K."/>
            <person name="Cerdeno-Tarraga A.-M."/>
            <person name="Chillingworth T."/>
            <person name="Cronin A."/>
            <person name="Davies R.M."/>
            <person name="Davis P."/>
            <person name="Dougan G."/>
            <person name="Feltwell T."/>
            <person name="Hamlin N."/>
            <person name="Holroyd S."/>
            <person name="Jagels K."/>
            <person name="Karlyshev A.V."/>
            <person name="Leather S."/>
            <person name="Moule S."/>
            <person name="Oyston P.C.F."/>
            <person name="Quail M.A."/>
            <person name="Rutherford K.M."/>
            <person name="Simmonds M."/>
            <person name="Skelton J."/>
            <person name="Stevens K."/>
            <person name="Whitehead S."/>
            <person name="Barrell B.G."/>
        </authorList>
    </citation>
    <scope>NUCLEOTIDE SEQUENCE [LARGE SCALE GENOMIC DNA]</scope>
    <source>
        <strain>CO-92 / Biovar Orientalis</strain>
    </source>
</reference>
<reference key="2">
    <citation type="journal article" date="2002" name="J. Bacteriol.">
        <title>Genome sequence of Yersinia pestis KIM.</title>
        <authorList>
            <person name="Deng W."/>
            <person name="Burland V."/>
            <person name="Plunkett G. III"/>
            <person name="Boutin A."/>
            <person name="Mayhew G.F."/>
            <person name="Liss P."/>
            <person name="Perna N.T."/>
            <person name="Rose D.J."/>
            <person name="Mau B."/>
            <person name="Zhou S."/>
            <person name="Schwartz D.C."/>
            <person name="Fetherston J.D."/>
            <person name="Lindler L.E."/>
            <person name="Brubaker R.R."/>
            <person name="Plano G.V."/>
            <person name="Straley S.C."/>
            <person name="McDonough K.A."/>
            <person name="Nilles M.L."/>
            <person name="Matson J.S."/>
            <person name="Blattner F.R."/>
            <person name="Perry R.D."/>
        </authorList>
    </citation>
    <scope>NUCLEOTIDE SEQUENCE [LARGE SCALE GENOMIC DNA]</scope>
    <source>
        <strain>KIM10+ / Biovar Mediaevalis</strain>
    </source>
</reference>
<reference key="3">
    <citation type="journal article" date="2004" name="DNA Res.">
        <title>Complete genome sequence of Yersinia pestis strain 91001, an isolate avirulent to humans.</title>
        <authorList>
            <person name="Song Y."/>
            <person name="Tong Z."/>
            <person name="Wang J."/>
            <person name="Wang L."/>
            <person name="Guo Z."/>
            <person name="Han Y."/>
            <person name="Zhang J."/>
            <person name="Pei D."/>
            <person name="Zhou D."/>
            <person name="Qin H."/>
            <person name="Pang X."/>
            <person name="Han Y."/>
            <person name="Zhai J."/>
            <person name="Li M."/>
            <person name="Cui B."/>
            <person name="Qi Z."/>
            <person name="Jin L."/>
            <person name="Dai R."/>
            <person name="Chen F."/>
            <person name="Li S."/>
            <person name="Ye C."/>
            <person name="Du Z."/>
            <person name="Lin W."/>
            <person name="Wang J."/>
            <person name="Yu J."/>
            <person name="Yang H."/>
            <person name="Wang J."/>
            <person name="Huang P."/>
            <person name="Yang R."/>
        </authorList>
    </citation>
    <scope>NUCLEOTIDE SEQUENCE [LARGE SCALE GENOMIC DNA]</scope>
    <source>
        <strain>91001 / Biovar Mediaevalis</strain>
    </source>
</reference>
<sequence length="313" mass="35799">MLEKQSVNQKEQYNFNKLQKRLRRNVGQAIADFNMIEEGDRVMVCLSGGKDSYTMLDILQSLQKSAPINFSLIAVNLDQKQPGFPEDILPAYLDKQGVEYKIVEENTYGIVKEIIPEGKTTCSLCSRLRRGILYRTATELGATKIALGHHRDDILQTLFLNMFYGGKLKGMPPKLMSDDGKHIVIRPLAYCREKDIERFAVAREYPIIPCNLCGSQPNLQRQVIKDMLRDWDKQYPGRIETMFSAMQNVVPSHLNDHKLFDFKSITHDSDIIDGGDLAFDREALPLNPVGWQPEDDEDTEKRPPVRLDVLEIK</sequence>
<evidence type="ECO:0000255" key="1">
    <source>
        <dbReference type="HAMAP-Rule" id="MF_01850"/>
    </source>
</evidence>
<evidence type="ECO:0000256" key="2">
    <source>
        <dbReference type="SAM" id="MobiDB-lite"/>
    </source>
</evidence>
<gene>
    <name evidence="1" type="primary">ttcA</name>
    <name type="ordered locus">YPO2335</name>
    <name type="ordered locus">y1998</name>
    <name type="ordered locus">YP_2121</name>
</gene>
<keyword id="KW-0004">4Fe-4S</keyword>
<keyword id="KW-0067">ATP-binding</keyword>
<keyword id="KW-0963">Cytoplasm</keyword>
<keyword id="KW-0408">Iron</keyword>
<keyword id="KW-0411">Iron-sulfur</keyword>
<keyword id="KW-0460">Magnesium</keyword>
<keyword id="KW-0479">Metal-binding</keyword>
<keyword id="KW-0547">Nucleotide-binding</keyword>
<keyword id="KW-1185">Reference proteome</keyword>
<keyword id="KW-0694">RNA-binding</keyword>
<keyword id="KW-0808">Transferase</keyword>
<keyword id="KW-0819">tRNA processing</keyword>
<keyword id="KW-0820">tRNA-binding</keyword>
<comment type="function">
    <text evidence="1">Catalyzes the ATP-dependent 2-thiolation of cytidine in position 32 of tRNA, to form 2-thiocytidine (s(2)C32). The sulfur atoms are provided by the cysteine/cysteine desulfurase (IscS) system.</text>
</comment>
<comment type="catalytic activity">
    <reaction evidence="1">
        <text>cytidine(32) in tRNA + S-sulfanyl-L-cysteinyl-[cysteine desulfurase] + AH2 + ATP = 2-thiocytidine(32) in tRNA + L-cysteinyl-[cysteine desulfurase] + A + AMP + diphosphate + H(+)</text>
        <dbReference type="Rhea" id="RHEA:57048"/>
        <dbReference type="Rhea" id="RHEA-COMP:10288"/>
        <dbReference type="Rhea" id="RHEA-COMP:12157"/>
        <dbReference type="Rhea" id="RHEA-COMP:12158"/>
        <dbReference type="Rhea" id="RHEA-COMP:14821"/>
        <dbReference type="ChEBI" id="CHEBI:13193"/>
        <dbReference type="ChEBI" id="CHEBI:15378"/>
        <dbReference type="ChEBI" id="CHEBI:17499"/>
        <dbReference type="ChEBI" id="CHEBI:29950"/>
        <dbReference type="ChEBI" id="CHEBI:30616"/>
        <dbReference type="ChEBI" id="CHEBI:33019"/>
        <dbReference type="ChEBI" id="CHEBI:61963"/>
        <dbReference type="ChEBI" id="CHEBI:82748"/>
        <dbReference type="ChEBI" id="CHEBI:141453"/>
        <dbReference type="ChEBI" id="CHEBI:456215"/>
    </reaction>
    <physiologicalReaction direction="left-to-right" evidence="1">
        <dbReference type="Rhea" id="RHEA:57049"/>
    </physiologicalReaction>
</comment>
<comment type="cofactor">
    <cofactor evidence="1">
        <name>Mg(2+)</name>
        <dbReference type="ChEBI" id="CHEBI:18420"/>
    </cofactor>
</comment>
<comment type="cofactor">
    <cofactor evidence="1">
        <name>[4Fe-4S] cluster</name>
        <dbReference type="ChEBI" id="CHEBI:49883"/>
    </cofactor>
    <text evidence="1">Binds 1 [4Fe-4S] cluster per subunit. The cluster is chelated by three Cys residues, the fourth Fe has a free coordination site that may bind a sulfur atom transferred from the persulfide of IscS.</text>
</comment>
<comment type="pathway">
    <text evidence="1">tRNA modification.</text>
</comment>
<comment type="subunit">
    <text evidence="1">Homodimer.</text>
</comment>
<comment type="subcellular location">
    <subcellularLocation>
        <location evidence="1">Cytoplasm</location>
    </subcellularLocation>
</comment>
<comment type="miscellaneous">
    <text evidence="1">The thiolation reaction likely consists of two steps: a first activation step by ATP to form an adenylated intermediate of the target base of tRNA, and a second nucleophilic substitution step of the sulfur (S) atom supplied by the hydrosulfide attached to the Fe-S cluster.</text>
</comment>
<comment type="similarity">
    <text evidence="1">Belongs to the TtcA family.</text>
</comment>
<proteinExistence type="inferred from homology"/>
<protein>
    <recommendedName>
        <fullName evidence="1">tRNA-cytidine(32) 2-sulfurtransferase</fullName>
        <ecNumber evidence="1">2.8.1.-</ecNumber>
    </recommendedName>
    <alternativeName>
        <fullName evidence="1">Two-thiocytidine biosynthesis protein A</fullName>
    </alternativeName>
    <alternativeName>
        <fullName evidence="1">tRNA 2-thiocytidine biosynthesis protein TtcA</fullName>
    </alternativeName>
</protein>